<dbReference type="EC" id="5.3.1.6" evidence="1"/>
<dbReference type="EMBL" id="D88555">
    <property type="protein sequence ID" value="BAA13646.1"/>
    <property type="molecule type" value="Genomic_DNA"/>
</dbReference>
<dbReference type="EMBL" id="AE000666">
    <property type="protein sequence ID" value="AAB85114.1"/>
    <property type="molecule type" value="Genomic_DNA"/>
</dbReference>
<dbReference type="PIR" id="G69180">
    <property type="entry name" value="G69180"/>
</dbReference>
<dbReference type="SMR" id="P72012"/>
<dbReference type="FunCoup" id="P72012">
    <property type="interactions" value="258"/>
</dbReference>
<dbReference type="STRING" id="187420.MTH_608"/>
<dbReference type="PaxDb" id="187420-MTH_608"/>
<dbReference type="EnsemblBacteria" id="AAB85114">
    <property type="protein sequence ID" value="AAB85114"/>
    <property type="gene ID" value="MTH_608"/>
</dbReference>
<dbReference type="KEGG" id="mth:MTH_608"/>
<dbReference type="PATRIC" id="fig|187420.15.peg.589"/>
<dbReference type="HOGENOM" id="CLU_056590_1_1_2"/>
<dbReference type="InParanoid" id="P72012"/>
<dbReference type="UniPathway" id="UPA00115">
    <property type="reaction ID" value="UER00412"/>
</dbReference>
<dbReference type="Proteomes" id="UP000005223">
    <property type="component" value="Chromosome"/>
</dbReference>
<dbReference type="GO" id="GO:0005829">
    <property type="term" value="C:cytosol"/>
    <property type="evidence" value="ECO:0007669"/>
    <property type="project" value="TreeGrafter"/>
</dbReference>
<dbReference type="GO" id="GO:0004751">
    <property type="term" value="F:ribose-5-phosphate isomerase activity"/>
    <property type="evidence" value="ECO:0007669"/>
    <property type="project" value="UniProtKB-UniRule"/>
</dbReference>
<dbReference type="GO" id="GO:0006014">
    <property type="term" value="P:D-ribose metabolic process"/>
    <property type="evidence" value="ECO:0007669"/>
    <property type="project" value="TreeGrafter"/>
</dbReference>
<dbReference type="GO" id="GO:0009052">
    <property type="term" value="P:pentose-phosphate shunt, non-oxidative branch"/>
    <property type="evidence" value="ECO:0007669"/>
    <property type="project" value="UniProtKB-UniRule"/>
</dbReference>
<dbReference type="CDD" id="cd01398">
    <property type="entry name" value="RPI_A"/>
    <property type="match status" value="1"/>
</dbReference>
<dbReference type="FunFam" id="3.30.70.260:FF:000018">
    <property type="entry name" value="Ribose-5-phosphate isomerase A"/>
    <property type="match status" value="1"/>
</dbReference>
<dbReference type="FunFam" id="3.40.50.1360:FF:000001">
    <property type="entry name" value="Ribose-5-phosphate isomerase A"/>
    <property type="match status" value="1"/>
</dbReference>
<dbReference type="Gene3D" id="3.30.70.260">
    <property type="match status" value="1"/>
</dbReference>
<dbReference type="Gene3D" id="3.40.50.1360">
    <property type="match status" value="1"/>
</dbReference>
<dbReference type="HAMAP" id="MF_00170">
    <property type="entry name" value="Rib_5P_isom_A"/>
    <property type="match status" value="1"/>
</dbReference>
<dbReference type="InterPro" id="IPR037171">
    <property type="entry name" value="NagB/RpiA_transferase-like"/>
</dbReference>
<dbReference type="InterPro" id="IPR020672">
    <property type="entry name" value="Ribose5P_isomerase_typA_subgr"/>
</dbReference>
<dbReference type="InterPro" id="IPR004788">
    <property type="entry name" value="Ribose5P_isomerase_type_A"/>
</dbReference>
<dbReference type="NCBIfam" id="NF001924">
    <property type="entry name" value="PRK00702.1"/>
    <property type="match status" value="1"/>
</dbReference>
<dbReference type="NCBIfam" id="TIGR00021">
    <property type="entry name" value="rpiA"/>
    <property type="match status" value="1"/>
</dbReference>
<dbReference type="PANTHER" id="PTHR11934">
    <property type="entry name" value="RIBOSE-5-PHOSPHATE ISOMERASE"/>
    <property type="match status" value="1"/>
</dbReference>
<dbReference type="PANTHER" id="PTHR11934:SF0">
    <property type="entry name" value="RIBOSE-5-PHOSPHATE ISOMERASE"/>
    <property type="match status" value="1"/>
</dbReference>
<dbReference type="Pfam" id="PF06026">
    <property type="entry name" value="Rib_5-P_isom_A"/>
    <property type="match status" value="1"/>
</dbReference>
<dbReference type="SMART" id="SM01134">
    <property type="entry name" value="DeoRC"/>
    <property type="match status" value="1"/>
</dbReference>
<dbReference type="SUPFAM" id="SSF75445">
    <property type="entry name" value="D-ribose-5-phosphate isomerase (RpiA), lid domain"/>
    <property type="match status" value="1"/>
</dbReference>
<dbReference type="SUPFAM" id="SSF100950">
    <property type="entry name" value="NagB/RpiA/CoA transferase-like"/>
    <property type="match status" value="1"/>
</dbReference>
<comment type="function">
    <text evidence="1">Catalyzes the reversible conversion of ribose-5-phosphate to ribulose 5-phosphate.</text>
</comment>
<comment type="catalytic activity">
    <reaction evidence="1">
        <text>aldehydo-D-ribose 5-phosphate = D-ribulose 5-phosphate</text>
        <dbReference type="Rhea" id="RHEA:14657"/>
        <dbReference type="ChEBI" id="CHEBI:58121"/>
        <dbReference type="ChEBI" id="CHEBI:58273"/>
        <dbReference type="EC" id="5.3.1.6"/>
    </reaction>
</comment>
<comment type="pathway">
    <text evidence="1">Carbohydrate degradation; pentose phosphate pathway; D-ribose 5-phosphate from D-ribulose 5-phosphate (non-oxidative stage): step 1/1.</text>
</comment>
<comment type="subunit">
    <text evidence="1">Homodimer.</text>
</comment>
<comment type="similarity">
    <text evidence="1">Belongs to the ribose 5-phosphate isomerase family.</text>
</comment>
<evidence type="ECO:0000255" key="1">
    <source>
        <dbReference type="HAMAP-Rule" id="MF_00170"/>
    </source>
</evidence>
<accession>P72012</accession>
<protein>
    <recommendedName>
        <fullName evidence="1">Ribose-5-phosphate isomerase A</fullName>
        <ecNumber evidence="1">5.3.1.6</ecNumber>
    </recommendedName>
    <alternativeName>
        <fullName evidence="1">Phosphoriboisomerase A</fullName>
        <shortName evidence="1">PRI</shortName>
    </alternativeName>
</protein>
<name>RPIA_METTH</name>
<feature type="chain" id="PRO_0000158513" description="Ribose-5-phosphate isomerase A">
    <location>
        <begin position="1"/>
        <end position="226"/>
    </location>
</feature>
<feature type="active site" description="Proton acceptor" evidence="1">
    <location>
        <position position="106"/>
    </location>
</feature>
<feature type="binding site" evidence="1">
    <location>
        <begin position="29"/>
        <end position="32"/>
    </location>
    <ligand>
        <name>substrate</name>
    </ligand>
</feature>
<feature type="binding site" evidence="1">
    <location>
        <begin position="84"/>
        <end position="87"/>
    </location>
    <ligand>
        <name>substrate</name>
    </ligand>
</feature>
<feature type="binding site" evidence="1">
    <location>
        <begin position="97"/>
        <end position="100"/>
    </location>
    <ligand>
        <name>substrate</name>
    </ligand>
</feature>
<feature type="binding site" evidence="1">
    <location>
        <position position="124"/>
    </location>
    <ligand>
        <name>substrate</name>
    </ligand>
</feature>
<reference key="1">
    <citation type="journal article" date="1998" name="J. Mol. Evol.">
        <title>Did archaeal and bacterial cells arise independently from noncellular precursors? A hypothesis stating that the advent of membrane phospholipid with enantiomeric glycerophosphate backbones caused the separation of the two lines of descent.</title>
        <authorList>
            <person name="Koga Y."/>
            <person name="Kyuragi T."/>
            <person name="Nishihara M."/>
            <person name="Sone N."/>
        </authorList>
    </citation>
    <scope>NUCLEOTIDE SEQUENCE [GENOMIC DNA]</scope>
    <source>
        <strain>ATCC 29096 / DSM 1053 / JCM 10044 / NBRC 100330 / Delta H</strain>
    </source>
</reference>
<reference key="2">
    <citation type="journal article" date="1998" name="J. Mol. Evol.">
        <authorList>
            <person name="Koga Y."/>
            <person name="Kyuragi T."/>
            <person name="Nishihara M."/>
            <person name="Sone N."/>
        </authorList>
    </citation>
    <scope>ERRATUM OF PUBMED:9419225</scope>
</reference>
<reference key="3">
    <citation type="journal article" date="1997" name="J. Bacteriol.">
        <title>Complete genome sequence of Methanobacterium thermoautotrophicum deltaH: functional analysis and comparative genomics.</title>
        <authorList>
            <person name="Smith D.R."/>
            <person name="Doucette-Stamm L.A."/>
            <person name="Deloughery C."/>
            <person name="Lee H.-M."/>
            <person name="Dubois J."/>
            <person name="Aldredge T."/>
            <person name="Bashirzadeh R."/>
            <person name="Blakely D."/>
            <person name="Cook R."/>
            <person name="Gilbert K."/>
            <person name="Harrison D."/>
            <person name="Hoang L."/>
            <person name="Keagle P."/>
            <person name="Lumm W."/>
            <person name="Pothier B."/>
            <person name="Qiu D."/>
            <person name="Spadafora R."/>
            <person name="Vicare R."/>
            <person name="Wang Y."/>
            <person name="Wierzbowski J."/>
            <person name="Gibson R."/>
            <person name="Jiwani N."/>
            <person name="Caruso A."/>
            <person name="Bush D."/>
            <person name="Safer H."/>
            <person name="Patwell D."/>
            <person name="Prabhakar S."/>
            <person name="McDougall S."/>
            <person name="Shimer G."/>
            <person name="Goyal A."/>
            <person name="Pietrovski S."/>
            <person name="Church G.M."/>
            <person name="Daniels C.J."/>
            <person name="Mao J.-I."/>
            <person name="Rice P."/>
            <person name="Noelling J."/>
            <person name="Reeve J.N."/>
        </authorList>
    </citation>
    <scope>NUCLEOTIDE SEQUENCE [LARGE SCALE GENOMIC DNA]</scope>
    <source>
        <strain>ATCC 29096 / DSM 1053 / JCM 10044 / NBRC 100330 / Delta H</strain>
    </source>
</reference>
<proteinExistence type="inferred from homology"/>
<keyword id="KW-0413">Isomerase</keyword>
<keyword id="KW-1185">Reference proteome</keyword>
<gene>
    <name evidence="1" type="primary">rpiA</name>
    <name type="ordered locus">MTH_608</name>
</gene>
<organism>
    <name type="scientific">Methanothermobacter thermautotrophicus (strain ATCC 29096 / DSM 1053 / JCM 10044 / NBRC 100330 / Delta H)</name>
    <name type="common">Methanobacterium thermoautotrophicum</name>
    <dbReference type="NCBI Taxonomy" id="187420"/>
    <lineage>
        <taxon>Archaea</taxon>
        <taxon>Methanobacteriati</taxon>
        <taxon>Methanobacteriota</taxon>
        <taxon>Methanomada group</taxon>
        <taxon>Methanobacteria</taxon>
        <taxon>Methanobacteriales</taxon>
        <taxon>Methanobacteriaceae</taxon>
        <taxon>Methanothermobacter</taxon>
    </lineage>
</organism>
<sequence length="226" mass="23785">MEVFMNLKKMAALRAVDEIDDGDVVGLGTGSTTHYFIEELGRRVREEGLEVMGVPTSYQSMFLAAESGIKVTSLAEHDVDVAVDGADEVDPDLNLIKGGGAAHTLEKIVDSSAASFIVIVDESKLVERLGAFPLPVEVIPAACRPVKLKLESMGASVNIRSSEGKDGPVVTDNGNFVLDAAFGVIDDPGAMESRLNNIPGVVENGIFAGIADMVIAGTSEGLKILR</sequence>